<accession>Q7LZT1</accession>
<sequence>VSQLESAMESLIKVFHTYSSKEGDKYKLSKAELKSLLQGELNDFLSASKDPMVVEKIMSDLDENQDGEVDFQEFVVLVAALTVACNEFFIESMKN</sequence>
<organism>
    <name type="scientific">Misgurnus fossilis</name>
    <name type="common">Weatherfish</name>
    <name type="synonym">Cobitis fossilis</name>
    <dbReference type="NCBI Taxonomy" id="7984"/>
    <lineage>
        <taxon>Eukaryota</taxon>
        <taxon>Metazoa</taxon>
        <taxon>Chordata</taxon>
        <taxon>Craniata</taxon>
        <taxon>Vertebrata</taxon>
        <taxon>Euteleostomi</taxon>
        <taxon>Actinopterygii</taxon>
        <taxon>Neopterygii</taxon>
        <taxon>Teleostei</taxon>
        <taxon>Ostariophysi</taxon>
        <taxon>Cypriniformes</taxon>
        <taxon>Cobitidae</taxon>
        <taxon>Cobitinae</taxon>
        <taxon>Misgurnus</taxon>
    </lineage>
</organism>
<keyword id="KW-0106">Calcium</keyword>
<keyword id="KW-0963">Cytoplasm</keyword>
<keyword id="KW-0903">Direct protein sequencing</keyword>
<keyword id="KW-0479">Metal-binding</keyword>
<keyword id="KW-0496">Mitochondrion</keyword>
<keyword id="KW-0677">Repeat</keyword>
<keyword id="KW-0703">Sarcoplasmic reticulum</keyword>
<keyword id="KW-0862">Zinc</keyword>
<name>S10A1_MISFO</name>
<evidence type="ECO:0000250" key="1">
    <source>
        <dbReference type="UniProtKB" id="P23297"/>
    </source>
</evidence>
<evidence type="ECO:0000250" key="2">
    <source>
        <dbReference type="UniProtKB" id="P35467"/>
    </source>
</evidence>
<evidence type="ECO:0000250" key="3">
    <source>
        <dbReference type="UniProtKB" id="P56565"/>
    </source>
</evidence>
<evidence type="ECO:0000255" key="4">
    <source>
        <dbReference type="PROSITE-ProRule" id="PRU00448"/>
    </source>
</evidence>
<evidence type="ECO:0000305" key="5"/>
<protein>
    <recommendedName>
        <fullName>Protein S100-A1</fullName>
    </recommendedName>
    <alternativeName>
        <fullName>S-100 protein alpha chain</fullName>
    </alternativeName>
    <alternativeName>
        <fullName>S-100 protein subunit alpha</fullName>
    </alternativeName>
    <alternativeName>
        <fullName>S100 calcium-binding protein A1</fullName>
    </alternativeName>
</protein>
<comment type="function">
    <text evidence="1">Small calcium binding protein that plays important roles in several biological processes such as Ca(2+) homeostasis, chondrocyte biology and cardiomyocyte regulation. In response to an increase in intracellular Ca(2+) levels, binds calcium which triggers conformational changes. These changes allow interactions with specific target proteins and modulate their activity. Regulates a network in cardiomyocytes controlling sarcoplasmic reticulum Ca(2+) cycling and mitochondrial function through interaction with the ryanodine receptors RYR1 and RYR2, sarcoplasmic reticulum Ca(2+)-ATPase/ATP2A2 and mitochondrial F1-ATPase. Facilitates diastolic Ca(2+) dissociation and myofilament mechanics in order to improve relaxation during diastole.</text>
</comment>
<comment type="subunit">
    <text evidence="1 2 3">Dimer of either two alpha chains, or two beta chains, or one alpha and one beta chain. Also forms heterodimers with S100P (By similarity). Interacts with AGER (By similarity). Interacts with CAPZA1 (By similarity). Interacts with FKBP4. Interacts with RYR1 and RYR2. Interacts with CACYBP in a calcium-dependent manner. Interacts with PPP5C (via TPR repeats); the interaction is calcium-dependent and modulates PPP5C activity. Interacts with ATP2A2 and PLN in a Ca(2+)-dependent manner (By similarity). Interacts with mitochondrial F1-ATPase subunits ATP5F1A and ATP5F1B; these interactions increase F1-ATPase activity (By similarity).</text>
</comment>
<comment type="subcellular location">
    <subcellularLocation>
        <location evidence="1">Cytoplasm</location>
    </subcellularLocation>
    <subcellularLocation>
        <location evidence="1">Sarcoplasmic reticulum</location>
    </subcellularLocation>
    <subcellularLocation>
        <location evidence="3">Mitochondrion</location>
    </subcellularLocation>
</comment>
<comment type="PTM">
    <text evidence="1">Glutathionylated; glutathionylation increases affinity to calcium about 10-fold.</text>
</comment>
<comment type="similarity">
    <text evidence="5">Belongs to the S-100 family.</text>
</comment>
<gene>
    <name type="primary">s100a1</name>
</gene>
<dbReference type="PIR" id="S35985">
    <property type="entry name" value="S35985"/>
</dbReference>
<dbReference type="SMR" id="Q7LZT1"/>
<dbReference type="GO" id="GO:0005739">
    <property type="term" value="C:mitochondrion"/>
    <property type="evidence" value="ECO:0007669"/>
    <property type="project" value="UniProtKB-SubCell"/>
</dbReference>
<dbReference type="GO" id="GO:0016529">
    <property type="term" value="C:sarcoplasmic reticulum"/>
    <property type="evidence" value="ECO:0007669"/>
    <property type="project" value="UniProtKB-SubCell"/>
</dbReference>
<dbReference type="GO" id="GO:0005509">
    <property type="term" value="F:calcium ion binding"/>
    <property type="evidence" value="ECO:0007669"/>
    <property type="project" value="InterPro"/>
</dbReference>
<dbReference type="GO" id="GO:0048306">
    <property type="term" value="F:calcium-dependent protein binding"/>
    <property type="evidence" value="ECO:0007669"/>
    <property type="project" value="TreeGrafter"/>
</dbReference>
<dbReference type="FunFam" id="1.10.238.10:FF:000044">
    <property type="entry name" value="Protein S100"/>
    <property type="match status" value="1"/>
</dbReference>
<dbReference type="Gene3D" id="1.10.238.10">
    <property type="entry name" value="EF-hand"/>
    <property type="match status" value="1"/>
</dbReference>
<dbReference type="InterPro" id="IPR011992">
    <property type="entry name" value="EF-hand-dom_pair"/>
</dbReference>
<dbReference type="InterPro" id="IPR018247">
    <property type="entry name" value="EF_Hand_1_Ca_BS"/>
</dbReference>
<dbReference type="InterPro" id="IPR002048">
    <property type="entry name" value="EF_hand_dom"/>
</dbReference>
<dbReference type="InterPro" id="IPR001751">
    <property type="entry name" value="S100/CaBP7/8-like_CS"/>
</dbReference>
<dbReference type="InterPro" id="IPR013787">
    <property type="entry name" value="S100_Ca-bd_sub"/>
</dbReference>
<dbReference type="PANTHER" id="PTHR11639:SF131">
    <property type="entry name" value="PROTEIN S100"/>
    <property type="match status" value="1"/>
</dbReference>
<dbReference type="PANTHER" id="PTHR11639">
    <property type="entry name" value="S100 CALCIUM-BINDING PROTEIN"/>
    <property type="match status" value="1"/>
</dbReference>
<dbReference type="Pfam" id="PF00036">
    <property type="entry name" value="EF-hand_1"/>
    <property type="match status" value="1"/>
</dbReference>
<dbReference type="Pfam" id="PF01023">
    <property type="entry name" value="S_100"/>
    <property type="match status" value="1"/>
</dbReference>
<dbReference type="SMART" id="SM00054">
    <property type="entry name" value="EFh"/>
    <property type="match status" value="1"/>
</dbReference>
<dbReference type="SMART" id="SM01394">
    <property type="entry name" value="S_100"/>
    <property type="match status" value="1"/>
</dbReference>
<dbReference type="SUPFAM" id="SSF47473">
    <property type="entry name" value="EF-hand"/>
    <property type="match status" value="1"/>
</dbReference>
<dbReference type="PROSITE" id="PS00018">
    <property type="entry name" value="EF_HAND_1"/>
    <property type="match status" value="1"/>
</dbReference>
<dbReference type="PROSITE" id="PS50222">
    <property type="entry name" value="EF_HAND_2"/>
    <property type="match status" value="1"/>
</dbReference>
<dbReference type="PROSITE" id="PS00303">
    <property type="entry name" value="S100_CABP"/>
    <property type="match status" value="1"/>
</dbReference>
<proteinExistence type="evidence at protein level"/>
<feature type="chain" id="PRO_0000143964" description="Protein S100-A1">
    <location>
        <begin position="1"/>
        <end position="95"/>
    </location>
</feature>
<feature type="domain" description="EF-hand 1" evidence="5">
    <location>
        <begin position="12"/>
        <end position="47"/>
    </location>
</feature>
<feature type="domain" description="EF-hand 2" evidence="4">
    <location>
        <begin position="49"/>
        <end position="84"/>
    </location>
</feature>
<feature type="binding site" evidence="2">
    <location>
        <position position="27"/>
    </location>
    <ligand>
        <name>Ca(2+)</name>
        <dbReference type="ChEBI" id="CHEBI:29108"/>
        <label>1</label>
        <note>low affinity</note>
    </ligand>
</feature>
<feature type="binding site" evidence="2">
    <location>
        <position position="32"/>
    </location>
    <ligand>
        <name>Ca(2+)</name>
        <dbReference type="ChEBI" id="CHEBI:29108"/>
        <label>1</label>
        <note>low affinity</note>
    </ligand>
</feature>
<feature type="binding site" evidence="4">
    <location>
        <position position="62"/>
    </location>
    <ligand>
        <name>Ca(2+)</name>
        <dbReference type="ChEBI" id="CHEBI:29108"/>
        <label>2</label>
        <note>high affinity</note>
    </ligand>
</feature>
<feature type="binding site" evidence="4">
    <location>
        <position position="64"/>
    </location>
    <ligand>
        <name>Ca(2+)</name>
        <dbReference type="ChEBI" id="CHEBI:29108"/>
        <label>2</label>
        <note>high affinity</note>
    </ligand>
</feature>
<feature type="binding site" evidence="4">
    <location>
        <position position="66"/>
    </location>
    <ligand>
        <name>Ca(2+)</name>
        <dbReference type="ChEBI" id="CHEBI:29108"/>
        <label>2</label>
        <note>high affinity</note>
    </ligand>
</feature>
<feature type="binding site" evidence="4">
    <location>
        <position position="68"/>
    </location>
    <ligand>
        <name>Ca(2+)</name>
        <dbReference type="ChEBI" id="CHEBI:29108"/>
        <label>2</label>
        <note>high affinity</note>
    </ligand>
</feature>
<feature type="binding site" evidence="4">
    <location>
        <position position="73"/>
    </location>
    <ligand>
        <name>Ca(2+)</name>
        <dbReference type="ChEBI" id="CHEBI:29108"/>
        <label>2</label>
        <note>high affinity</note>
    </ligand>
</feature>
<reference key="1">
    <citation type="journal article" date="1993" name="Mech. Dev.">
        <title>Transduction of Ca(2+) signals upon fertilization of eggs; identification of an S-100 protein as a major Ca(2+)-binding protein.</title>
        <authorList>
            <person name="Ivanenkov V.V."/>
            <person name="Gerke V."/>
            <person name="Minin A.A."/>
            <person name="Plessmann U."/>
            <person name="Weber K."/>
        </authorList>
    </citation>
    <scope>PROTEIN SEQUENCE</scope>
    <source>
        <tissue>Egg</tissue>
    </source>
</reference>